<proteinExistence type="inferred from homology"/>
<gene>
    <name evidence="1" type="primary">gmhA</name>
    <name type="ordered locus">COXBURSA331_A1935</name>
</gene>
<reference key="1">
    <citation type="submission" date="2007-11" db="EMBL/GenBank/DDBJ databases">
        <title>Genome sequencing of phylogenetically and phenotypically diverse Coxiella burnetii isolates.</title>
        <authorList>
            <person name="Seshadri R."/>
            <person name="Samuel J.E."/>
        </authorList>
    </citation>
    <scope>NUCLEOTIDE SEQUENCE [LARGE SCALE GENOMIC DNA]</scope>
    <source>
        <strain>RSA 331 / Henzerling II</strain>
    </source>
</reference>
<sequence>MNLFQRVKYNFEESIKTKTAAIELLVDPIVQAGELMSQCLLNEHKILSCGNGGSAADAQHFSSEMLNRFETERPSFPALALTTDASTVTAIANDYSYAEVFSKQIAGLGSTGDILLAISTSGHSKNILQAITAAHIRGMNVVALTGRDGGELFTLLGTDDIEIRVPAESTARIQETHALIIHCLCDIIDRKLIPSSEDH</sequence>
<keyword id="KW-0119">Carbohydrate metabolism</keyword>
<keyword id="KW-0963">Cytoplasm</keyword>
<keyword id="KW-0413">Isomerase</keyword>
<keyword id="KW-0479">Metal-binding</keyword>
<keyword id="KW-0862">Zinc</keyword>
<protein>
    <recommendedName>
        <fullName evidence="1">Phosphoheptose isomerase</fullName>
        <ecNumber evidence="1">5.3.1.28</ecNumber>
    </recommendedName>
    <alternativeName>
        <fullName evidence="1">Sedoheptulose 7-phosphate isomerase</fullName>
    </alternativeName>
</protein>
<feature type="chain" id="PRO_1000075095" description="Phosphoheptose isomerase">
    <location>
        <begin position="1"/>
        <end position="199"/>
    </location>
</feature>
<feature type="domain" description="SIS" evidence="1">
    <location>
        <begin position="36"/>
        <end position="198"/>
    </location>
</feature>
<feature type="binding site" evidence="1">
    <location>
        <begin position="51"/>
        <end position="53"/>
    </location>
    <ligand>
        <name>substrate</name>
    </ligand>
</feature>
<feature type="binding site" evidence="1">
    <location>
        <position position="60"/>
    </location>
    <ligand>
        <name>Zn(2+)</name>
        <dbReference type="ChEBI" id="CHEBI:29105"/>
    </ligand>
</feature>
<feature type="binding site" evidence="1">
    <location>
        <position position="64"/>
    </location>
    <ligand>
        <name>substrate</name>
    </ligand>
</feature>
<feature type="binding site" evidence="1">
    <location>
        <position position="64"/>
    </location>
    <ligand>
        <name>Zn(2+)</name>
        <dbReference type="ChEBI" id="CHEBI:29105"/>
    </ligand>
</feature>
<feature type="binding site" evidence="1">
    <location>
        <begin position="93"/>
        <end position="94"/>
    </location>
    <ligand>
        <name>substrate</name>
    </ligand>
</feature>
<feature type="binding site" evidence="1">
    <location>
        <begin position="119"/>
        <end position="121"/>
    </location>
    <ligand>
        <name>substrate</name>
    </ligand>
</feature>
<feature type="binding site" evidence="1">
    <location>
        <position position="124"/>
    </location>
    <ligand>
        <name>substrate</name>
    </ligand>
</feature>
<feature type="binding site" evidence="1">
    <location>
        <position position="174"/>
    </location>
    <ligand>
        <name>substrate</name>
    </ligand>
</feature>
<feature type="binding site" evidence="1">
    <location>
        <position position="174"/>
    </location>
    <ligand>
        <name>Zn(2+)</name>
        <dbReference type="ChEBI" id="CHEBI:29105"/>
    </ligand>
</feature>
<feature type="binding site" evidence="1">
    <location>
        <position position="182"/>
    </location>
    <ligand>
        <name>Zn(2+)</name>
        <dbReference type="ChEBI" id="CHEBI:29105"/>
    </ligand>
</feature>
<name>GMHA_COXBR</name>
<organism>
    <name type="scientific">Coxiella burnetii (strain RSA 331 / Henzerling II)</name>
    <dbReference type="NCBI Taxonomy" id="360115"/>
    <lineage>
        <taxon>Bacteria</taxon>
        <taxon>Pseudomonadati</taxon>
        <taxon>Pseudomonadota</taxon>
        <taxon>Gammaproteobacteria</taxon>
        <taxon>Legionellales</taxon>
        <taxon>Coxiellaceae</taxon>
        <taxon>Coxiella</taxon>
    </lineage>
</organism>
<evidence type="ECO:0000255" key="1">
    <source>
        <dbReference type="HAMAP-Rule" id="MF_00067"/>
    </source>
</evidence>
<dbReference type="EC" id="5.3.1.28" evidence="1"/>
<dbReference type="EMBL" id="CP000890">
    <property type="protein sequence ID" value="ABX77444.1"/>
    <property type="molecule type" value="Genomic_DNA"/>
</dbReference>
<dbReference type="RefSeq" id="WP_012220776.1">
    <property type="nucleotide sequence ID" value="NC_010117.1"/>
</dbReference>
<dbReference type="SMR" id="A9NAA5"/>
<dbReference type="KEGG" id="cbs:COXBURSA331_A1935"/>
<dbReference type="HOGENOM" id="CLU_080999_3_1_6"/>
<dbReference type="UniPathway" id="UPA00041">
    <property type="reaction ID" value="UER00436"/>
</dbReference>
<dbReference type="GO" id="GO:0005737">
    <property type="term" value="C:cytoplasm"/>
    <property type="evidence" value="ECO:0007669"/>
    <property type="project" value="UniProtKB-SubCell"/>
</dbReference>
<dbReference type="GO" id="GO:0097367">
    <property type="term" value="F:carbohydrate derivative binding"/>
    <property type="evidence" value="ECO:0007669"/>
    <property type="project" value="InterPro"/>
</dbReference>
<dbReference type="GO" id="GO:0008968">
    <property type="term" value="F:D-sedoheptulose 7-phosphate isomerase activity"/>
    <property type="evidence" value="ECO:0007669"/>
    <property type="project" value="UniProtKB-UniRule"/>
</dbReference>
<dbReference type="GO" id="GO:0008270">
    <property type="term" value="F:zinc ion binding"/>
    <property type="evidence" value="ECO:0007669"/>
    <property type="project" value="UniProtKB-UniRule"/>
</dbReference>
<dbReference type="GO" id="GO:0005975">
    <property type="term" value="P:carbohydrate metabolic process"/>
    <property type="evidence" value="ECO:0007669"/>
    <property type="project" value="UniProtKB-UniRule"/>
</dbReference>
<dbReference type="GO" id="GO:2001061">
    <property type="term" value="P:D-glycero-D-manno-heptose 7-phosphate biosynthetic process"/>
    <property type="evidence" value="ECO:0007669"/>
    <property type="project" value="UniProtKB-UniPathway"/>
</dbReference>
<dbReference type="CDD" id="cd05006">
    <property type="entry name" value="SIS_GmhA"/>
    <property type="match status" value="1"/>
</dbReference>
<dbReference type="Gene3D" id="3.40.50.10490">
    <property type="entry name" value="Glucose-6-phosphate isomerase like protein, domain 1"/>
    <property type="match status" value="1"/>
</dbReference>
<dbReference type="HAMAP" id="MF_00067">
    <property type="entry name" value="GmhA"/>
    <property type="match status" value="1"/>
</dbReference>
<dbReference type="InterPro" id="IPR035461">
    <property type="entry name" value="GmhA/DiaA"/>
</dbReference>
<dbReference type="InterPro" id="IPR004515">
    <property type="entry name" value="Phosphoheptose_Isoase"/>
</dbReference>
<dbReference type="InterPro" id="IPR001347">
    <property type="entry name" value="SIS_dom"/>
</dbReference>
<dbReference type="InterPro" id="IPR046348">
    <property type="entry name" value="SIS_dom_sf"/>
</dbReference>
<dbReference type="InterPro" id="IPR050099">
    <property type="entry name" value="SIS_GmhA/DiaA_subfam"/>
</dbReference>
<dbReference type="NCBIfam" id="NF010546">
    <property type="entry name" value="PRK13936.1"/>
    <property type="match status" value="1"/>
</dbReference>
<dbReference type="PANTHER" id="PTHR30390:SF6">
    <property type="entry name" value="DNAA INITIATOR-ASSOCIATING PROTEIN DIAA"/>
    <property type="match status" value="1"/>
</dbReference>
<dbReference type="PANTHER" id="PTHR30390">
    <property type="entry name" value="SEDOHEPTULOSE 7-PHOSPHATE ISOMERASE / DNAA INITIATOR-ASSOCIATING FACTOR FOR REPLICATION INITIATION"/>
    <property type="match status" value="1"/>
</dbReference>
<dbReference type="Pfam" id="PF13580">
    <property type="entry name" value="SIS_2"/>
    <property type="match status" value="1"/>
</dbReference>
<dbReference type="SUPFAM" id="SSF53697">
    <property type="entry name" value="SIS domain"/>
    <property type="match status" value="1"/>
</dbReference>
<dbReference type="PROSITE" id="PS51464">
    <property type="entry name" value="SIS"/>
    <property type="match status" value="1"/>
</dbReference>
<comment type="function">
    <text evidence="1">Catalyzes the isomerization of sedoheptulose 7-phosphate in D-glycero-D-manno-heptose 7-phosphate.</text>
</comment>
<comment type="catalytic activity">
    <reaction evidence="1">
        <text>2 D-sedoheptulose 7-phosphate = D-glycero-alpha-D-manno-heptose 7-phosphate + D-glycero-beta-D-manno-heptose 7-phosphate</text>
        <dbReference type="Rhea" id="RHEA:27489"/>
        <dbReference type="ChEBI" id="CHEBI:57483"/>
        <dbReference type="ChEBI" id="CHEBI:60203"/>
        <dbReference type="ChEBI" id="CHEBI:60204"/>
        <dbReference type="EC" id="5.3.1.28"/>
    </reaction>
</comment>
<comment type="cofactor">
    <cofactor evidence="1">
        <name>Zn(2+)</name>
        <dbReference type="ChEBI" id="CHEBI:29105"/>
    </cofactor>
    <text evidence="1">Binds 1 zinc ion per subunit.</text>
</comment>
<comment type="pathway">
    <text evidence="1">Carbohydrate biosynthesis; D-glycero-D-manno-heptose 7-phosphate biosynthesis; D-glycero-alpha-D-manno-heptose 7-phosphate and D-glycero-beta-D-manno-heptose 7-phosphate from sedoheptulose 7-phosphate: step 1/1.</text>
</comment>
<comment type="subunit">
    <text evidence="1">Homotetramer.</text>
</comment>
<comment type="subcellular location">
    <subcellularLocation>
        <location evidence="1">Cytoplasm</location>
    </subcellularLocation>
</comment>
<comment type="miscellaneous">
    <text evidence="1">The reaction produces a racemic mixture of D-glycero-alpha-D-manno-heptose 7-phosphate and D-glycero-beta-D-manno-heptose 7-phosphate.</text>
</comment>
<comment type="similarity">
    <text evidence="1">Belongs to the SIS family. GmhA subfamily.</text>
</comment>
<accession>A9NAA5</accession>